<keyword id="KW-0414">Isoprene biosynthesis</keyword>
<keyword id="KW-0456">Lyase</keyword>
<keyword id="KW-0479">Metal-binding</keyword>
<gene>
    <name evidence="1" type="primary">ispF</name>
    <name type="ordered locus">Bcen2424_1942</name>
</gene>
<dbReference type="EC" id="4.6.1.12" evidence="1"/>
<dbReference type="EMBL" id="CP000458">
    <property type="protein sequence ID" value="ABK08693.1"/>
    <property type="molecule type" value="Genomic_DNA"/>
</dbReference>
<dbReference type="RefSeq" id="WP_006488015.1">
    <property type="nucleotide sequence ID" value="NC_008542.1"/>
</dbReference>
<dbReference type="SMR" id="A0K866"/>
<dbReference type="GeneID" id="83048743"/>
<dbReference type="KEGG" id="bch:Bcen2424_1942"/>
<dbReference type="HOGENOM" id="CLU_084630_2_0_4"/>
<dbReference type="UniPathway" id="UPA00056">
    <property type="reaction ID" value="UER00095"/>
</dbReference>
<dbReference type="GO" id="GO:0008685">
    <property type="term" value="F:2-C-methyl-D-erythritol 2,4-cyclodiphosphate synthase activity"/>
    <property type="evidence" value="ECO:0007669"/>
    <property type="project" value="UniProtKB-UniRule"/>
</dbReference>
<dbReference type="GO" id="GO:0046872">
    <property type="term" value="F:metal ion binding"/>
    <property type="evidence" value="ECO:0007669"/>
    <property type="project" value="UniProtKB-KW"/>
</dbReference>
<dbReference type="GO" id="GO:0019288">
    <property type="term" value="P:isopentenyl diphosphate biosynthetic process, methylerythritol 4-phosphate pathway"/>
    <property type="evidence" value="ECO:0007669"/>
    <property type="project" value="UniProtKB-UniRule"/>
</dbReference>
<dbReference type="GO" id="GO:0016114">
    <property type="term" value="P:terpenoid biosynthetic process"/>
    <property type="evidence" value="ECO:0007669"/>
    <property type="project" value="InterPro"/>
</dbReference>
<dbReference type="CDD" id="cd00554">
    <property type="entry name" value="MECDP_synthase"/>
    <property type="match status" value="1"/>
</dbReference>
<dbReference type="FunFam" id="3.30.1330.50:FF:000001">
    <property type="entry name" value="2-C-methyl-D-erythritol 2,4-cyclodiphosphate synthase"/>
    <property type="match status" value="1"/>
</dbReference>
<dbReference type="Gene3D" id="3.30.1330.50">
    <property type="entry name" value="2-C-methyl-D-erythritol 2,4-cyclodiphosphate synthase"/>
    <property type="match status" value="1"/>
</dbReference>
<dbReference type="HAMAP" id="MF_00107">
    <property type="entry name" value="IspF"/>
    <property type="match status" value="1"/>
</dbReference>
<dbReference type="InterPro" id="IPR003526">
    <property type="entry name" value="MECDP_synthase"/>
</dbReference>
<dbReference type="InterPro" id="IPR020555">
    <property type="entry name" value="MECDP_synthase_CS"/>
</dbReference>
<dbReference type="InterPro" id="IPR036571">
    <property type="entry name" value="MECDP_synthase_sf"/>
</dbReference>
<dbReference type="NCBIfam" id="TIGR00151">
    <property type="entry name" value="ispF"/>
    <property type="match status" value="1"/>
</dbReference>
<dbReference type="PANTHER" id="PTHR43181">
    <property type="entry name" value="2-C-METHYL-D-ERYTHRITOL 2,4-CYCLODIPHOSPHATE SYNTHASE, CHLOROPLASTIC"/>
    <property type="match status" value="1"/>
</dbReference>
<dbReference type="PANTHER" id="PTHR43181:SF1">
    <property type="entry name" value="2-C-METHYL-D-ERYTHRITOL 2,4-CYCLODIPHOSPHATE SYNTHASE, CHLOROPLASTIC"/>
    <property type="match status" value="1"/>
</dbReference>
<dbReference type="Pfam" id="PF02542">
    <property type="entry name" value="YgbB"/>
    <property type="match status" value="1"/>
</dbReference>
<dbReference type="SUPFAM" id="SSF69765">
    <property type="entry name" value="IpsF-like"/>
    <property type="match status" value="1"/>
</dbReference>
<dbReference type="PROSITE" id="PS01350">
    <property type="entry name" value="ISPF"/>
    <property type="match status" value="1"/>
</dbReference>
<feature type="chain" id="PRO_1000022810" description="2-C-methyl-D-erythritol 2,4-cyclodiphosphate synthase">
    <location>
        <begin position="1"/>
        <end position="161"/>
    </location>
</feature>
<feature type="binding site" evidence="1">
    <location>
        <begin position="10"/>
        <end position="12"/>
    </location>
    <ligand>
        <name>4-CDP-2-C-methyl-D-erythritol 2-phosphate</name>
        <dbReference type="ChEBI" id="CHEBI:57919"/>
    </ligand>
</feature>
<feature type="binding site" evidence="1">
    <location>
        <position position="10"/>
    </location>
    <ligand>
        <name>a divalent metal cation</name>
        <dbReference type="ChEBI" id="CHEBI:60240"/>
    </ligand>
</feature>
<feature type="binding site" evidence="1">
    <location>
        <position position="12"/>
    </location>
    <ligand>
        <name>a divalent metal cation</name>
        <dbReference type="ChEBI" id="CHEBI:60240"/>
    </ligand>
</feature>
<feature type="binding site" evidence="1">
    <location>
        <begin position="36"/>
        <end position="37"/>
    </location>
    <ligand>
        <name>4-CDP-2-C-methyl-D-erythritol 2-phosphate</name>
        <dbReference type="ChEBI" id="CHEBI:57919"/>
    </ligand>
</feature>
<feature type="binding site" evidence="1">
    <location>
        <position position="44"/>
    </location>
    <ligand>
        <name>a divalent metal cation</name>
        <dbReference type="ChEBI" id="CHEBI:60240"/>
    </ligand>
</feature>
<feature type="binding site" evidence="1">
    <location>
        <begin position="58"/>
        <end position="60"/>
    </location>
    <ligand>
        <name>4-CDP-2-C-methyl-D-erythritol 2-phosphate</name>
        <dbReference type="ChEBI" id="CHEBI:57919"/>
    </ligand>
</feature>
<feature type="binding site" evidence="1">
    <location>
        <begin position="63"/>
        <end position="67"/>
    </location>
    <ligand>
        <name>4-CDP-2-C-methyl-D-erythritol 2-phosphate</name>
        <dbReference type="ChEBI" id="CHEBI:57919"/>
    </ligand>
</feature>
<feature type="binding site" evidence="1">
    <location>
        <position position="144"/>
    </location>
    <ligand>
        <name>4-CDP-2-C-methyl-D-erythritol 2-phosphate</name>
        <dbReference type="ChEBI" id="CHEBI:57919"/>
    </ligand>
</feature>
<feature type="site" description="Transition state stabilizer" evidence="1">
    <location>
        <position position="36"/>
    </location>
</feature>
<feature type="site" description="Transition state stabilizer" evidence="1">
    <location>
        <position position="135"/>
    </location>
</feature>
<organism>
    <name type="scientific">Burkholderia cenocepacia (strain HI2424)</name>
    <dbReference type="NCBI Taxonomy" id="331272"/>
    <lineage>
        <taxon>Bacteria</taxon>
        <taxon>Pseudomonadati</taxon>
        <taxon>Pseudomonadota</taxon>
        <taxon>Betaproteobacteria</taxon>
        <taxon>Burkholderiales</taxon>
        <taxon>Burkholderiaceae</taxon>
        <taxon>Burkholderia</taxon>
        <taxon>Burkholderia cepacia complex</taxon>
    </lineage>
</organism>
<evidence type="ECO:0000255" key="1">
    <source>
        <dbReference type="HAMAP-Rule" id="MF_00107"/>
    </source>
</evidence>
<reference key="1">
    <citation type="submission" date="2006-08" db="EMBL/GenBank/DDBJ databases">
        <title>Complete sequence of chromosome 1 of Burkholderia cenocepacia HI2424.</title>
        <authorList>
            <person name="Copeland A."/>
            <person name="Lucas S."/>
            <person name="Lapidus A."/>
            <person name="Barry K."/>
            <person name="Detter J.C."/>
            <person name="Glavina del Rio T."/>
            <person name="Hammon N."/>
            <person name="Israni S."/>
            <person name="Pitluck S."/>
            <person name="Chain P."/>
            <person name="Malfatti S."/>
            <person name="Shin M."/>
            <person name="Vergez L."/>
            <person name="Schmutz J."/>
            <person name="Larimer F."/>
            <person name="Land M."/>
            <person name="Hauser L."/>
            <person name="Kyrpides N."/>
            <person name="Kim E."/>
            <person name="LiPuma J.J."/>
            <person name="Gonzalez C.F."/>
            <person name="Konstantinidis K."/>
            <person name="Tiedje J.M."/>
            <person name="Richardson P."/>
        </authorList>
    </citation>
    <scope>NUCLEOTIDE SEQUENCE [LARGE SCALE GENOMIC DNA]</scope>
    <source>
        <strain>HI2424</strain>
    </source>
</reference>
<comment type="function">
    <text evidence="1">Involved in the biosynthesis of isopentenyl diphosphate (IPP) and dimethylallyl diphosphate (DMAPP), two major building blocks of isoprenoid compounds. Catalyzes the conversion of 4-diphosphocytidyl-2-C-methyl-D-erythritol 2-phosphate (CDP-ME2P) to 2-C-methyl-D-erythritol 2,4-cyclodiphosphate (ME-CPP) with a corresponding release of cytidine 5-monophosphate (CMP).</text>
</comment>
<comment type="catalytic activity">
    <reaction evidence="1">
        <text>4-CDP-2-C-methyl-D-erythritol 2-phosphate = 2-C-methyl-D-erythritol 2,4-cyclic diphosphate + CMP</text>
        <dbReference type="Rhea" id="RHEA:23864"/>
        <dbReference type="ChEBI" id="CHEBI:57919"/>
        <dbReference type="ChEBI" id="CHEBI:58483"/>
        <dbReference type="ChEBI" id="CHEBI:60377"/>
        <dbReference type="EC" id="4.6.1.12"/>
    </reaction>
</comment>
<comment type="cofactor">
    <cofactor evidence="1">
        <name>a divalent metal cation</name>
        <dbReference type="ChEBI" id="CHEBI:60240"/>
    </cofactor>
    <text evidence="1">Binds 1 divalent metal cation per subunit.</text>
</comment>
<comment type="pathway">
    <text evidence="1">Isoprenoid biosynthesis; isopentenyl diphosphate biosynthesis via DXP pathway; isopentenyl diphosphate from 1-deoxy-D-xylulose 5-phosphate: step 4/6.</text>
</comment>
<comment type="subunit">
    <text evidence="1">Homotrimer.</text>
</comment>
<comment type="similarity">
    <text evidence="1">Belongs to the IspF family.</text>
</comment>
<name>ISPF_BURCH</name>
<accession>A0K866</accession>
<sequence length="161" mass="16923">MDFRIGQGYDVHQLVEGRPLIIGGVTIPYERGLLGHSDADVLLHAITDALFGAAALGDIGRHFSDTDAAFKGADSRVLLRACAERVKAAGFTIQNVDSTVIAQAPKLAPHIDGMRANIAADLGLPLERVNVKAKTNEKLGYLGRGEGIEAQAAALLVKQGG</sequence>
<proteinExistence type="inferred from homology"/>
<protein>
    <recommendedName>
        <fullName evidence="1">2-C-methyl-D-erythritol 2,4-cyclodiphosphate synthase</fullName>
        <shortName evidence="1">MECDP-synthase</shortName>
        <shortName evidence="1">MECPP-synthase</shortName>
        <shortName evidence="1">MECPS</shortName>
        <ecNumber evidence="1">4.6.1.12</ecNumber>
    </recommendedName>
</protein>